<dbReference type="EMBL" id="CP001063">
    <property type="protein sequence ID" value="ACD09452.1"/>
    <property type="molecule type" value="Genomic_DNA"/>
</dbReference>
<dbReference type="RefSeq" id="WP_001124225.1">
    <property type="nucleotide sequence ID" value="NC_010658.1"/>
</dbReference>
<dbReference type="SMR" id="B2U395"/>
<dbReference type="STRING" id="344609.SbBS512_E1959"/>
<dbReference type="GeneID" id="97601348"/>
<dbReference type="KEGG" id="sbc:SbBS512_E1959"/>
<dbReference type="HOGENOM" id="CLU_169643_1_1_6"/>
<dbReference type="Proteomes" id="UP000001030">
    <property type="component" value="Chromosome"/>
</dbReference>
<dbReference type="GO" id="GO:0022625">
    <property type="term" value="C:cytosolic large ribosomal subunit"/>
    <property type="evidence" value="ECO:0007669"/>
    <property type="project" value="TreeGrafter"/>
</dbReference>
<dbReference type="GO" id="GO:0003735">
    <property type="term" value="F:structural constituent of ribosome"/>
    <property type="evidence" value="ECO:0007669"/>
    <property type="project" value="InterPro"/>
</dbReference>
<dbReference type="GO" id="GO:0006412">
    <property type="term" value="P:translation"/>
    <property type="evidence" value="ECO:0007669"/>
    <property type="project" value="UniProtKB-UniRule"/>
</dbReference>
<dbReference type="FunFam" id="4.10.410.60:FF:000001">
    <property type="entry name" value="50S ribosomal protein L35"/>
    <property type="match status" value="1"/>
</dbReference>
<dbReference type="Gene3D" id="4.10.410.60">
    <property type="match status" value="1"/>
</dbReference>
<dbReference type="HAMAP" id="MF_00514">
    <property type="entry name" value="Ribosomal_bL35"/>
    <property type="match status" value="1"/>
</dbReference>
<dbReference type="InterPro" id="IPR001706">
    <property type="entry name" value="Ribosomal_bL35"/>
</dbReference>
<dbReference type="InterPro" id="IPR021137">
    <property type="entry name" value="Ribosomal_bL35-like"/>
</dbReference>
<dbReference type="InterPro" id="IPR018265">
    <property type="entry name" value="Ribosomal_bL35_CS"/>
</dbReference>
<dbReference type="InterPro" id="IPR037229">
    <property type="entry name" value="Ribosomal_bL35_sf"/>
</dbReference>
<dbReference type="NCBIfam" id="TIGR00001">
    <property type="entry name" value="rpmI_bact"/>
    <property type="match status" value="1"/>
</dbReference>
<dbReference type="PANTHER" id="PTHR33343">
    <property type="entry name" value="54S RIBOSOMAL PROTEIN BL35M"/>
    <property type="match status" value="1"/>
</dbReference>
<dbReference type="PANTHER" id="PTHR33343:SF1">
    <property type="entry name" value="LARGE RIBOSOMAL SUBUNIT PROTEIN BL35M"/>
    <property type="match status" value="1"/>
</dbReference>
<dbReference type="Pfam" id="PF01632">
    <property type="entry name" value="Ribosomal_L35p"/>
    <property type="match status" value="1"/>
</dbReference>
<dbReference type="PRINTS" id="PR00064">
    <property type="entry name" value="RIBOSOMALL35"/>
</dbReference>
<dbReference type="SUPFAM" id="SSF143034">
    <property type="entry name" value="L35p-like"/>
    <property type="match status" value="1"/>
</dbReference>
<dbReference type="PROSITE" id="PS00936">
    <property type="entry name" value="RIBOSOMAL_L35"/>
    <property type="match status" value="1"/>
</dbReference>
<keyword id="KW-1185">Reference proteome</keyword>
<keyword id="KW-0687">Ribonucleoprotein</keyword>
<keyword id="KW-0689">Ribosomal protein</keyword>
<name>RL35_SHIB3</name>
<feature type="chain" id="PRO_1000127409" description="Large ribosomal subunit protein bL35">
    <location>
        <begin position="1"/>
        <end position="65"/>
    </location>
</feature>
<feature type="region of interest" description="Disordered" evidence="2">
    <location>
        <begin position="1"/>
        <end position="22"/>
    </location>
</feature>
<feature type="compositionally biased region" description="Basic residues" evidence="2">
    <location>
        <begin position="10"/>
        <end position="22"/>
    </location>
</feature>
<protein>
    <recommendedName>
        <fullName evidence="1">Large ribosomal subunit protein bL35</fullName>
    </recommendedName>
    <alternativeName>
        <fullName evidence="3">50S ribosomal protein L35</fullName>
    </alternativeName>
</protein>
<sequence>MPKIKTVRGAAKRFKKTGKGGFKHKHANLRHILTKKATKRKRHLRPKAMVSKGDLGLVIACLPYA</sequence>
<evidence type="ECO:0000255" key="1">
    <source>
        <dbReference type="HAMAP-Rule" id="MF_00514"/>
    </source>
</evidence>
<evidence type="ECO:0000256" key="2">
    <source>
        <dbReference type="SAM" id="MobiDB-lite"/>
    </source>
</evidence>
<evidence type="ECO:0000305" key="3"/>
<organism>
    <name type="scientific">Shigella boydii serotype 18 (strain CDC 3083-94 / BS512)</name>
    <dbReference type="NCBI Taxonomy" id="344609"/>
    <lineage>
        <taxon>Bacteria</taxon>
        <taxon>Pseudomonadati</taxon>
        <taxon>Pseudomonadota</taxon>
        <taxon>Gammaproteobacteria</taxon>
        <taxon>Enterobacterales</taxon>
        <taxon>Enterobacteriaceae</taxon>
        <taxon>Shigella</taxon>
    </lineage>
</organism>
<reference key="1">
    <citation type="submission" date="2008-05" db="EMBL/GenBank/DDBJ databases">
        <title>Complete sequence of Shigella boydii serotype 18 strain BS512.</title>
        <authorList>
            <person name="Rasko D.A."/>
            <person name="Rosovitz M."/>
            <person name="Maurelli A.T."/>
            <person name="Myers G."/>
            <person name="Seshadri R."/>
            <person name="Cer R."/>
            <person name="Jiang L."/>
            <person name="Ravel J."/>
            <person name="Sebastian Y."/>
        </authorList>
    </citation>
    <scope>NUCLEOTIDE SEQUENCE [LARGE SCALE GENOMIC DNA]</scope>
    <source>
        <strain>CDC 3083-94 / BS512</strain>
    </source>
</reference>
<gene>
    <name evidence="1" type="primary">rpmI</name>
    <name type="ordered locus">SbBS512_E1959</name>
</gene>
<comment type="similarity">
    <text evidence="1">Belongs to the bacterial ribosomal protein bL35 family.</text>
</comment>
<proteinExistence type="inferred from homology"/>
<accession>B2U395</accession>